<accession>O27122</accession>
<keyword id="KW-0002">3D-structure</keyword>
<keyword id="KW-0963">Cytoplasm</keyword>
<keyword id="KW-0240">DNA-directed RNA polymerase</keyword>
<keyword id="KW-0548">Nucleotidyltransferase</keyword>
<keyword id="KW-1185">Reference proteome</keyword>
<keyword id="KW-0804">Transcription</keyword>
<keyword id="KW-0808">Transferase</keyword>
<protein>
    <recommendedName>
        <fullName evidence="1">DNA-directed RNA polymerase subunit Rpo5</fullName>
        <ecNumber evidence="1">2.7.7.6</ecNumber>
    </recommendedName>
    <alternativeName>
        <fullName evidence="1">DNA-directed RNA polymerase subunit H</fullName>
    </alternativeName>
    <alternativeName>
        <fullName evidence="2">RPB5</fullName>
    </alternativeName>
</protein>
<reference key="1">
    <citation type="journal article" date="1997" name="J. Bacteriol.">
        <title>Complete genome sequence of Methanobacterium thermoautotrophicum deltaH: functional analysis and comparative genomics.</title>
        <authorList>
            <person name="Smith D.R."/>
            <person name="Doucette-Stamm L.A."/>
            <person name="Deloughery C."/>
            <person name="Lee H.-M."/>
            <person name="Dubois J."/>
            <person name="Aldredge T."/>
            <person name="Bashirzadeh R."/>
            <person name="Blakely D."/>
            <person name="Cook R."/>
            <person name="Gilbert K."/>
            <person name="Harrison D."/>
            <person name="Hoang L."/>
            <person name="Keagle P."/>
            <person name="Lumm W."/>
            <person name="Pothier B."/>
            <person name="Qiu D."/>
            <person name="Spadafora R."/>
            <person name="Vicare R."/>
            <person name="Wang Y."/>
            <person name="Wierzbowski J."/>
            <person name="Gibson R."/>
            <person name="Jiwani N."/>
            <person name="Caruso A."/>
            <person name="Bush D."/>
            <person name="Safer H."/>
            <person name="Patwell D."/>
            <person name="Prabhakar S."/>
            <person name="McDougall S."/>
            <person name="Shimer G."/>
            <person name="Goyal A."/>
            <person name="Pietrovski S."/>
            <person name="Church G.M."/>
            <person name="Daniels C.J."/>
            <person name="Mao J.-I."/>
            <person name="Rice P."/>
            <person name="Noelling J."/>
            <person name="Reeve J.N."/>
        </authorList>
    </citation>
    <scope>NUCLEOTIDE SEQUENCE [LARGE SCALE GENOMIC DNA]</scope>
    <source>
        <strain>ATCC 29096 / DSM 1053 / JCM 10044 / NBRC 100330 / Delta H</strain>
    </source>
</reference>
<reference key="2">
    <citation type="journal article" date="2000" name="Proc. Natl. Acad. Sci. U.S.A.">
        <title>Solution structure of the RNA polymerase subunit RPB5 from Methanobacterium thermoautotrophicum.</title>
        <authorList>
            <person name="Yee A."/>
            <person name="Booth V."/>
            <person name="Dharamsi A."/>
            <person name="Engel A."/>
            <person name="Edwards A.M."/>
            <person name="Arrowsmith C.H."/>
        </authorList>
    </citation>
    <scope>STRUCTURE BY NMR</scope>
</reference>
<gene>
    <name evidence="1" type="primary">rpo5</name>
    <name evidence="1" type="synonym">rpoH</name>
    <name type="ordered locus">MTH_1048</name>
</gene>
<comment type="function">
    <text evidence="1">DNA-dependent RNA polymerase (RNAP) catalyzes the transcription of DNA into RNA using the four ribonucleoside triphosphates as substrates.</text>
</comment>
<comment type="catalytic activity">
    <reaction evidence="1">
        <text>RNA(n) + a ribonucleoside 5'-triphosphate = RNA(n+1) + diphosphate</text>
        <dbReference type="Rhea" id="RHEA:21248"/>
        <dbReference type="Rhea" id="RHEA-COMP:14527"/>
        <dbReference type="Rhea" id="RHEA-COMP:17342"/>
        <dbReference type="ChEBI" id="CHEBI:33019"/>
        <dbReference type="ChEBI" id="CHEBI:61557"/>
        <dbReference type="ChEBI" id="CHEBI:140395"/>
        <dbReference type="EC" id="2.7.7.6"/>
    </reaction>
</comment>
<comment type="subunit">
    <text evidence="1">Part of the RNA polymerase complex.</text>
</comment>
<comment type="subcellular location">
    <subcellularLocation>
        <location evidence="1">Cytoplasm</location>
    </subcellularLocation>
</comment>
<comment type="similarity">
    <text evidence="1">Belongs to the archaeal Rpo5/eukaryotic RPB5 RNA polymerase subunit family.</text>
</comment>
<organism>
    <name type="scientific">Methanothermobacter thermautotrophicus (strain ATCC 29096 / DSM 1053 / JCM 10044 / NBRC 100330 / Delta H)</name>
    <name type="common">Methanobacterium thermoautotrophicum</name>
    <dbReference type="NCBI Taxonomy" id="187420"/>
    <lineage>
        <taxon>Archaea</taxon>
        <taxon>Methanobacteriati</taxon>
        <taxon>Methanobacteriota</taxon>
        <taxon>Methanomada group</taxon>
        <taxon>Methanobacteria</taxon>
        <taxon>Methanobacteriales</taxon>
        <taxon>Methanobacteriaceae</taxon>
        <taxon>Methanothermobacter</taxon>
    </lineage>
</organism>
<feature type="chain" id="PRO_0000146096" description="DNA-directed RNA polymerase subunit Rpo5">
    <location>
        <begin position="1"/>
        <end position="77"/>
    </location>
</feature>
<feature type="strand" evidence="3">
    <location>
        <begin position="7"/>
        <end position="10"/>
    </location>
</feature>
<feature type="strand" evidence="3">
    <location>
        <begin position="13"/>
        <end position="17"/>
    </location>
</feature>
<feature type="helix" evidence="3">
    <location>
        <begin position="19"/>
        <end position="28"/>
    </location>
</feature>
<feature type="turn" evidence="3">
    <location>
        <begin position="33"/>
        <end position="35"/>
    </location>
</feature>
<feature type="helix" evidence="3">
    <location>
        <begin position="44"/>
        <end position="47"/>
    </location>
</feature>
<feature type="helix" evidence="3">
    <location>
        <begin position="48"/>
        <end position="50"/>
    </location>
</feature>
<feature type="strand" evidence="3">
    <location>
        <begin position="56"/>
        <end position="63"/>
    </location>
</feature>
<feature type="turn" evidence="3">
    <location>
        <begin position="64"/>
        <end position="66"/>
    </location>
</feature>
<feature type="strand" evidence="3">
    <location>
        <begin position="67"/>
        <end position="74"/>
    </location>
</feature>
<name>RPO5_METTH</name>
<proteinExistence type="evidence at protein level"/>
<sequence>MKREILKHQLVPEHVILNESEAKRVLKELDAHPEQLPKIKTTDPVAKAIGAKRGDIVKIIRKSPTAEEFVTYRLVQD</sequence>
<evidence type="ECO:0000255" key="1">
    <source>
        <dbReference type="HAMAP-Rule" id="MF_00025"/>
    </source>
</evidence>
<evidence type="ECO:0000303" key="2">
    <source>
    </source>
</evidence>
<evidence type="ECO:0007829" key="3">
    <source>
        <dbReference type="PDB" id="1EIK"/>
    </source>
</evidence>
<dbReference type="EC" id="2.7.7.6" evidence="1"/>
<dbReference type="EMBL" id="AE000666">
    <property type="protein sequence ID" value="AAB85539.1"/>
    <property type="molecule type" value="Genomic_DNA"/>
</dbReference>
<dbReference type="PIR" id="C69006">
    <property type="entry name" value="C69006"/>
</dbReference>
<dbReference type="RefSeq" id="WP_010876674.1">
    <property type="nucleotide sequence ID" value="NC_000916.1"/>
</dbReference>
<dbReference type="PDB" id="1EIK">
    <property type="method" value="NMR"/>
    <property type="chains" value="A=1-77"/>
</dbReference>
<dbReference type="PDBsum" id="1EIK"/>
<dbReference type="BMRB" id="O27122"/>
<dbReference type="SMR" id="O27122"/>
<dbReference type="FunCoup" id="O27122">
    <property type="interactions" value="2"/>
</dbReference>
<dbReference type="STRING" id="187420.MTH_1048"/>
<dbReference type="PaxDb" id="187420-MTH_1048"/>
<dbReference type="DNASU" id="1471456"/>
<dbReference type="EnsemblBacteria" id="AAB85539">
    <property type="protein sequence ID" value="AAB85539"/>
    <property type="gene ID" value="MTH_1048"/>
</dbReference>
<dbReference type="KEGG" id="mth:MTH_1048"/>
<dbReference type="HOGENOM" id="CLU_058320_4_0_2"/>
<dbReference type="InParanoid" id="O27122"/>
<dbReference type="EvolutionaryTrace" id="O27122"/>
<dbReference type="Proteomes" id="UP000005223">
    <property type="component" value="Chromosome"/>
</dbReference>
<dbReference type="GO" id="GO:0005737">
    <property type="term" value="C:cytoplasm"/>
    <property type="evidence" value="ECO:0007669"/>
    <property type="project" value="UniProtKB-SubCell"/>
</dbReference>
<dbReference type="GO" id="GO:0000428">
    <property type="term" value="C:DNA-directed RNA polymerase complex"/>
    <property type="evidence" value="ECO:0007669"/>
    <property type="project" value="UniProtKB-KW"/>
</dbReference>
<dbReference type="GO" id="GO:0003677">
    <property type="term" value="F:DNA binding"/>
    <property type="evidence" value="ECO:0007669"/>
    <property type="project" value="InterPro"/>
</dbReference>
<dbReference type="GO" id="GO:0003899">
    <property type="term" value="F:DNA-directed RNA polymerase activity"/>
    <property type="evidence" value="ECO:0007669"/>
    <property type="project" value="UniProtKB-UniRule"/>
</dbReference>
<dbReference type="GO" id="GO:0006366">
    <property type="term" value="P:transcription by RNA polymerase II"/>
    <property type="evidence" value="ECO:0007669"/>
    <property type="project" value="TreeGrafter"/>
</dbReference>
<dbReference type="GO" id="GO:0006362">
    <property type="term" value="P:transcription elongation by RNA polymerase I"/>
    <property type="evidence" value="ECO:0007669"/>
    <property type="project" value="TreeGrafter"/>
</dbReference>
<dbReference type="GO" id="GO:0042797">
    <property type="term" value="P:tRNA transcription by RNA polymerase III"/>
    <property type="evidence" value="ECO:0007669"/>
    <property type="project" value="TreeGrafter"/>
</dbReference>
<dbReference type="FunFam" id="3.90.940.20:FF:000001">
    <property type="entry name" value="DNA-directed RNA polymerases I, II, and III subunit RPABC1"/>
    <property type="match status" value="1"/>
</dbReference>
<dbReference type="Gene3D" id="3.90.940.20">
    <property type="entry name" value="RPB5-like RNA polymerase subunit"/>
    <property type="match status" value="1"/>
</dbReference>
<dbReference type="HAMAP" id="MF_00025">
    <property type="entry name" value="RNApol_Rpo5_RPB5"/>
    <property type="match status" value="1"/>
</dbReference>
<dbReference type="InterPro" id="IPR014381">
    <property type="entry name" value="Arch_Rpo5/euc_Rpb5"/>
</dbReference>
<dbReference type="InterPro" id="IPR000783">
    <property type="entry name" value="RNA_pol_subH/Rpb5_C"/>
</dbReference>
<dbReference type="InterPro" id="IPR020608">
    <property type="entry name" value="RNA_pol_subH/Rpb5_CS"/>
</dbReference>
<dbReference type="InterPro" id="IPR035913">
    <property type="entry name" value="RPB5-like_sf"/>
</dbReference>
<dbReference type="NCBIfam" id="NF007129">
    <property type="entry name" value="PRK09570.1"/>
    <property type="match status" value="1"/>
</dbReference>
<dbReference type="PANTHER" id="PTHR10535">
    <property type="entry name" value="DNA-DIRECTED RNA POLYMERASES I, II, AND III SUBUNIT RPABC1"/>
    <property type="match status" value="1"/>
</dbReference>
<dbReference type="PANTHER" id="PTHR10535:SF0">
    <property type="entry name" value="DNA-DIRECTED RNA POLYMERASES I, II, AND III SUBUNIT RPABC1"/>
    <property type="match status" value="1"/>
</dbReference>
<dbReference type="Pfam" id="PF01191">
    <property type="entry name" value="RNA_pol_Rpb5_C"/>
    <property type="match status" value="1"/>
</dbReference>
<dbReference type="SUPFAM" id="SSF55287">
    <property type="entry name" value="RPB5-like RNA polymerase subunit"/>
    <property type="match status" value="1"/>
</dbReference>
<dbReference type="PROSITE" id="PS01110">
    <property type="entry name" value="RNA_POL_H_23KD"/>
    <property type="match status" value="1"/>
</dbReference>